<geneLocation type="chloroplast"/>
<accession>Q32RU2</accession>
<feature type="chain" id="PRO_0000276316" description="Photosystem II reaction center protein T">
    <location>
        <begin position="1"/>
        <end position="35"/>
    </location>
</feature>
<feature type="transmembrane region" description="Helical" evidence="1">
    <location>
        <begin position="3"/>
        <end position="23"/>
    </location>
</feature>
<sequence length="35" mass="3971">MEALVYTFLLVGTLGIIFFAIFFREPPKVPVKGKK</sequence>
<dbReference type="EMBL" id="AY958085">
    <property type="protein sequence ID" value="AAX45734.1"/>
    <property type="molecule type" value="Genomic_DNA"/>
</dbReference>
<dbReference type="RefSeq" id="YP_636434.1">
    <property type="nucleotide sequence ID" value="NC_008116.1"/>
</dbReference>
<dbReference type="SMR" id="Q32RU2"/>
<dbReference type="GeneID" id="4108597"/>
<dbReference type="GO" id="GO:0009535">
    <property type="term" value="C:chloroplast thylakoid membrane"/>
    <property type="evidence" value="ECO:0007669"/>
    <property type="project" value="UniProtKB-SubCell"/>
</dbReference>
<dbReference type="GO" id="GO:0009539">
    <property type="term" value="C:photosystem II reaction center"/>
    <property type="evidence" value="ECO:0007669"/>
    <property type="project" value="InterPro"/>
</dbReference>
<dbReference type="GO" id="GO:0015979">
    <property type="term" value="P:photosynthesis"/>
    <property type="evidence" value="ECO:0007669"/>
    <property type="project" value="UniProtKB-UniRule"/>
</dbReference>
<dbReference type="HAMAP" id="MF_00808">
    <property type="entry name" value="PSII_PsbT"/>
    <property type="match status" value="1"/>
</dbReference>
<dbReference type="InterPro" id="IPR001743">
    <property type="entry name" value="PSII_PsbT"/>
</dbReference>
<dbReference type="InterPro" id="IPR037268">
    <property type="entry name" value="PSII_PsbT_sf"/>
</dbReference>
<dbReference type="PANTHER" id="PTHR36411">
    <property type="match status" value="1"/>
</dbReference>
<dbReference type="PANTHER" id="PTHR36411:SF2">
    <property type="entry name" value="PHOTOSYSTEM II REACTION CENTER PROTEIN T"/>
    <property type="match status" value="1"/>
</dbReference>
<dbReference type="Pfam" id="PF01405">
    <property type="entry name" value="PsbT"/>
    <property type="match status" value="1"/>
</dbReference>
<dbReference type="SUPFAM" id="SSF161029">
    <property type="entry name" value="Photosystem II reaction center protein T, PsbT"/>
    <property type="match status" value="1"/>
</dbReference>
<gene>
    <name evidence="1" type="primary">psbT</name>
</gene>
<protein>
    <recommendedName>
        <fullName evidence="1">Photosystem II reaction center protein T</fullName>
        <shortName evidence="1">PSII-T</shortName>
    </recommendedName>
</protein>
<evidence type="ECO:0000255" key="1">
    <source>
        <dbReference type="HAMAP-Rule" id="MF_00808"/>
    </source>
</evidence>
<organism>
    <name type="scientific">Staurastrum punctulatum</name>
    <name type="common">Green alga</name>
    <name type="synonym">Cosmoastrum punctulatum</name>
    <dbReference type="NCBI Taxonomy" id="102822"/>
    <lineage>
        <taxon>Eukaryota</taxon>
        <taxon>Viridiplantae</taxon>
        <taxon>Streptophyta</taxon>
        <taxon>Zygnematophyceae</taxon>
        <taxon>Zygnematophycidae</taxon>
        <taxon>Desmidiales</taxon>
        <taxon>Desmidiaceae</taxon>
        <taxon>Staurastrum</taxon>
    </lineage>
</organism>
<proteinExistence type="inferred from homology"/>
<reference key="1">
    <citation type="journal article" date="2005" name="BMC Biol.">
        <title>The complete chloroplast DNA sequences of the charophycean green algae Staurastrum and Zygnema reveal that the chloroplast genome underwent extensive changes during the evolution of the Zygnematales.</title>
        <authorList>
            <person name="Turmel M."/>
            <person name="Otis C."/>
            <person name="Lemieux C."/>
        </authorList>
    </citation>
    <scope>NUCLEOTIDE SEQUENCE [LARGE SCALE GENOMIC DNA]</scope>
</reference>
<keyword id="KW-0150">Chloroplast</keyword>
<keyword id="KW-0472">Membrane</keyword>
<keyword id="KW-0602">Photosynthesis</keyword>
<keyword id="KW-0604">Photosystem II</keyword>
<keyword id="KW-0934">Plastid</keyword>
<keyword id="KW-0793">Thylakoid</keyword>
<keyword id="KW-0812">Transmembrane</keyword>
<keyword id="KW-1133">Transmembrane helix</keyword>
<name>PSBT_STAPU</name>
<comment type="function">
    <text evidence="1">Found at the monomer-monomer interface of the photosystem II (PS II) dimer, plays a role in assembly and dimerization of PSII. PSII is a light-driven water plastoquinone oxidoreductase, using light energy to abstract electrons from H(2)O, generating a proton gradient subsequently used for ATP formation.</text>
</comment>
<comment type="subunit">
    <text evidence="1">PSII is composed of 1 copy each of membrane proteins PsbA, PsbB, PsbC, PsbD, PsbE, PsbF, PsbH, PsbI, PsbJ, PsbK, PsbL, PsbM, PsbT, PsbY, PsbZ, Psb30/Ycf12, at least 3 peripheral proteins of the oxygen-evolving complex and a large number of cofactors. It forms dimeric complexes.</text>
</comment>
<comment type="subcellular location">
    <subcellularLocation>
        <location evidence="1">Plastid</location>
        <location evidence="1">Chloroplast thylakoid membrane</location>
        <topology evidence="1">Single-pass membrane protein</topology>
    </subcellularLocation>
</comment>
<comment type="similarity">
    <text evidence="1">Belongs to the PsbT family.</text>
</comment>